<evidence type="ECO:0000255" key="1">
    <source>
        <dbReference type="HAMAP-Rule" id="MF_00197"/>
    </source>
</evidence>
<dbReference type="EC" id="5.1.1.7" evidence="1"/>
<dbReference type="EMBL" id="CP000777">
    <property type="protein sequence ID" value="ABZ93101.1"/>
    <property type="molecule type" value="Genomic_DNA"/>
</dbReference>
<dbReference type="RefSeq" id="WP_012476131.1">
    <property type="nucleotide sequence ID" value="NC_010842.1"/>
</dbReference>
<dbReference type="SMR" id="B0SC36"/>
<dbReference type="KEGG" id="lbf:LBF_0565"/>
<dbReference type="HOGENOM" id="CLU_053306_3_0_12"/>
<dbReference type="UniPathway" id="UPA00034">
    <property type="reaction ID" value="UER00025"/>
</dbReference>
<dbReference type="GO" id="GO:0005829">
    <property type="term" value="C:cytosol"/>
    <property type="evidence" value="ECO:0007669"/>
    <property type="project" value="TreeGrafter"/>
</dbReference>
<dbReference type="GO" id="GO:0008837">
    <property type="term" value="F:diaminopimelate epimerase activity"/>
    <property type="evidence" value="ECO:0007669"/>
    <property type="project" value="UniProtKB-UniRule"/>
</dbReference>
<dbReference type="GO" id="GO:0009089">
    <property type="term" value="P:lysine biosynthetic process via diaminopimelate"/>
    <property type="evidence" value="ECO:0007669"/>
    <property type="project" value="UniProtKB-UniRule"/>
</dbReference>
<dbReference type="FunFam" id="3.10.310.10:FF:000004">
    <property type="entry name" value="Diaminopimelate epimerase"/>
    <property type="match status" value="1"/>
</dbReference>
<dbReference type="Gene3D" id="3.10.310.10">
    <property type="entry name" value="Diaminopimelate Epimerase, Chain A, domain 1"/>
    <property type="match status" value="2"/>
</dbReference>
<dbReference type="HAMAP" id="MF_00197">
    <property type="entry name" value="DAP_epimerase"/>
    <property type="match status" value="1"/>
</dbReference>
<dbReference type="InterPro" id="IPR018510">
    <property type="entry name" value="DAP_epimerase_AS"/>
</dbReference>
<dbReference type="InterPro" id="IPR001653">
    <property type="entry name" value="DAP_epimerase_DapF"/>
</dbReference>
<dbReference type="NCBIfam" id="TIGR00652">
    <property type="entry name" value="DapF"/>
    <property type="match status" value="1"/>
</dbReference>
<dbReference type="PANTHER" id="PTHR31689:SF0">
    <property type="entry name" value="DIAMINOPIMELATE EPIMERASE"/>
    <property type="match status" value="1"/>
</dbReference>
<dbReference type="PANTHER" id="PTHR31689">
    <property type="entry name" value="DIAMINOPIMELATE EPIMERASE, CHLOROPLASTIC"/>
    <property type="match status" value="1"/>
</dbReference>
<dbReference type="Pfam" id="PF01678">
    <property type="entry name" value="DAP_epimerase"/>
    <property type="match status" value="2"/>
</dbReference>
<dbReference type="SUPFAM" id="SSF54506">
    <property type="entry name" value="Diaminopimelate epimerase-like"/>
    <property type="match status" value="2"/>
</dbReference>
<dbReference type="PROSITE" id="PS01326">
    <property type="entry name" value="DAP_EPIMERASE"/>
    <property type="match status" value="1"/>
</dbReference>
<sequence>MKINFTKMEGIGNDYVYIDATKNDIRLSPEQIQKLSDRNFGIGGDGVIFIRNSNSGEFQMDMYNSDGSSSEMCGNGVRCVGKFVYDHGLTKNQKPTIETGKGVLTLDLKTGTNGKVEMVTVDMGEPILKPSLVPIVWKGDEPVINQVIEVQGKQYHFTAVSMGNPHCVIYVDDADDFPVREIGPIIENHPFFPRRVNVEFVSIKGKDHLYQRTWERGTGETLACGTGACAVTVASILNGKTGRSVRIDLRGGTLHIEWQENGSVFMTGPAKEVFSGEVEI</sequence>
<gene>
    <name evidence="1" type="primary">dapF</name>
    <name type="ordered locus">LBF_0565</name>
</gene>
<reference key="1">
    <citation type="journal article" date="2008" name="PLoS ONE">
        <title>Genome sequence of the saprophyte Leptospira biflexa provides insights into the evolution of Leptospira and the pathogenesis of leptospirosis.</title>
        <authorList>
            <person name="Picardeau M."/>
            <person name="Bulach D.M."/>
            <person name="Bouchier C."/>
            <person name="Zuerner R.L."/>
            <person name="Zidane N."/>
            <person name="Wilson P.J."/>
            <person name="Creno S."/>
            <person name="Kuczek E.S."/>
            <person name="Bommezzadri S."/>
            <person name="Davis J.C."/>
            <person name="McGrath A."/>
            <person name="Johnson M.J."/>
            <person name="Boursaux-Eude C."/>
            <person name="Seemann T."/>
            <person name="Rouy Z."/>
            <person name="Coppel R.L."/>
            <person name="Rood J.I."/>
            <person name="Lajus A."/>
            <person name="Davies J.K."/>
            <person name="Medigue C."/>
            <person name="Adler B."/>
        </authorList>
    </citation>
    <scope>NUCLEOTIDE SEQUENCE [LARGE SCALE GENOMIC DNA]</scope>
    <source>
        <strain>Patoc 1 / Ames</strain>
    </source>
</reference>
<organism>
    <name type="scientific">Leptospira biflexa serovar Patoc (strain Patoc 1 / Ames)</name>
    <dbReference type="NCBI Taxonomy" id="355278"/>
    <lineage>
        <taxon>Bacteria</taxon>
        <taxon>Pseudomonadati</taxon>
        <taxon>Spirochaetota</taxon>
        <taxon>Spirochaetia</taxon>
        <taxon>Leptospirales</taxon>
        <taxon>Leptospiraceae</taxon>
        <taxon>Leptospira</taxon>
    </lineage>
</organism>
<protein>
    <recommendedName>
        <fullName evidence="1">Diaminopimelate epimerase</fullName>
        <shortName evidence="1">DAP epimerase</shortName>
        <ecNumber evidence="1">5.1.1.7</ecNumber>
    </recommendedName>
    <alternativeName>
        <fullName evidence="1">PLP-independent amino acid racemase</fullName>
    </alternativeName>
</protein>
<comment type="function">
    <text evidence="1">Catalyzes the stereoinversion of LL-2,6-diaminopimelate (L,L-DAP) to meso-diaminopimelate (meso-DAP), a precursor of L-lysine and an essential component of the bacterial peptidoglycan.</text>
</comment>
<comment type="catalytic activity">
    <reaction evidence="1">
        <text>(2S,6S)-2,6-diaminopimelate = meso-2,6-diaminopimelate</text>
        <dbReference type="Rhea" id="RHEA:15393"/>
        <dbReference type="ChEBI" id="CHEBI:57609"/>
        <dbReference type="ChEBI" id="CHEBI:57791"/>
        <dbReference type="EC" id="5.1.1.7"/>
    </reaction>
</comment>
<comment type="pathway">
    <text evidence="1">Amino-acid biosynthesis; L-lysine biosynthesis via DAP pathway; DL-2,6-diaminopimelate from LL-2,6-diaminopimelate: step 1/1.</text>
</comment>
<comment type="subunit">
    <text evidence="1">Homodimer.</text>
</comment>
<comment type="subcellular location">
    <subcellularLocation>
        <location evidence="1">Cytoplasm</location>
    </subcellularLocation>
</comment>
<comment type="similarity">
    <text evidence="1">Belongs to the diaminopimelate epimerase family.</text>
</comment>
<keyword id="KW-0028">Amino-acid biosynthesis</keyword>
<keyword id="KW-0963">Cytoplasm</keyword>
<keyword id="KW-0413">Isomerase</keyword>
<keyword id="KW-0457">Lysine biosynthesis</keyword>
<accession>B0SC36</accession>
<proteinExistence type="inferred from homology"/>
<feature type="chain" id="PRO_1000118673" description="Diaminopimelate epimerase">
    <location>
        <begin position="1"/>
        <end position="280"/>
    </location>
</feature>
<feature type="active site" description="Proton donor" evidence="1">
    <location>
        <position position="73"/>
    </location>
</feature>
<feature type="active site" description="Proton acceptor" evidence="1">
    <location>
        <position position="224"/>
    </location>
</feature>
<feature type="binding site" evidence="1">
    <location>
        <position position="13"/>
    </location>
    <ligand>
        <name>substrate</name>
    </ligand>
</feature>
<feature type="binding site" evidence="1">
    <location>
        <position position="64"/>
    </location>
    <ligand>
        <name>substrate</name>
    </ligand>
</feature>
<feature type="binding site" evidence="1">
    <location>
        <begin position="74"/>
        <end position="75"/>
    </location>
    <ligand>
        <name>substrate</name>
    </ligand>
</feature>
<feature type="binding site" evidence="1">
    <location>
        <position position="164"/>
    </location>
    <ligand>
        <name>substrate</name>
    </ligand>
</feature>
<feature type="binding site" evidence="1">
    <location>
        <position position="197"/>
    </location>
    <ligand>
        <name>substrate</name>
    </ligand>
</feature>
<feature type="binding site" evidence="1">
    <location>
        <begin position="215"/>
        <end position="216"/>
    </location>
    <ligand>
        <name>substrate</name>
    </ligand>
</feature>
<feature type="binding site" evidence="1">
    <location>
        <begin position="225"/>
        <end position="226"/>
    </location>
    <ligand>
        <name>substrate</name>
    </ligand>
</feature>
<feature type="site" description="Could be important to modulate the pK values of the two catalytic cysteine residues" evidence="1">
    <location>
        <position position="166"/>
    </location>
</feature>
<feature type="site" description="Could be important to modulate the pK values of the two catalytic cysteine residues" evidence="1">
    <location>
        <position position="215"/>
    </location>
</feature>
<name>DAPF_LEPBA</name>